<protein>
    <recommendedName>
        <fullName evidence="1">Gamma-aminobutyraldehyde dehydrogenase</fullName>
        <shortName evidence="1">ABALDH</shortName>
        <ecNumber evidence="1">1.2.1.19</ecNumber>
    </recommendedName>
    <alternativeName>
        <fullName evidence="1">1-pyrroline dehydrogenase</fullName>
    </alternativeName>
    <alternativeName>
        <fullName evidence="1">4-aminobutanal dehydrogenase</fullName>
    </alternativeName>
    <alternativeName>
        <fullName evidence="1">5-aminopentanal dehydrogenase</fullName>
        <ecNumber evidence="1">1.2.1.-</ecNumber>
    </alternativeName>
</protein>
<dbReference type="EC" id="1.2.1.19" evidence="1"/>
<dbReference type="EC" id="1.2.1.-" evidence="1"/>
<dbReference type="EMBL" id="CP000948">
    <property type="protein sequence ID" value="ACB02660.1"/>
    <property type="molecule type" value="Genomic_DNA"/>
</dbReference>
<dbReference type="RefSeq" id="WP_001163872.1">
    <property type="nucleotide sequence ID" value="NC_010473.1"/>
</dbReference>
<dbReference type="SMR" id="B1XDF5"/>
<dbReference type="KEGG" id="ecd:ECDH10B_1574"/>
<dbReference type="HOGENOM" id="CLU_005391_1_0_6"/>
<dbReference type="UniPathway" id="UPA00188">
    <property type="reaction ID" value="UER00292"/>
</dbReference>
<dbReference type="GO" id="GO:0019145">
    <property type="term" value="F:aminobutyraldehyde dehydrogenase (NAD+) activity"/>
    <property type="evidence" value="ECO:0007669"/>
    <property type="project" value="UniProtKB-UniRule"/>
</dbReference>
<dbReference type="GO" id="GO:0051287">
    <property type="term" value="F:NAD binding"/>
    <property type="evidence" value="ECO:0007669"/>
    <property type="project" value="UniProtKB-UniRule"/>
</dbReference>
<dbReference type="GO" id="GO:0019477">
    <property type="term" value="P:L-lysine catabolic process"/>
    <property type="evidence" value="ECO:0007669"/>
    <property type="project" value="UniProtKB-UniRule"/>
</dbReference>
<dbReference type="GO" id="GO:0009447">
    <property type="term" value="P:putrescine catabolic process"/>
    <property type="evidence" value="ECO:0007669"/>
    <property type="project" value="UniProtKB-UniRule"/>
</dbReference>
<dbReference type="CDD" id="cd07092">
    <property type="entry name" value="ALDH_ABALDH-YdcW"/>
    <property type="match status" value="1"/>
</dbReference>
<dbReference type="FunFam" id="3.40.605.10:FF:000001">
    <property type="entry name" value="Aldehyde dehydrogenase 1"/>
    <property type="match status" value="1"/>
</dbReference>
<dbReference type="FunFam" id="3.40.309.10:FF:000010">
    <property type="entry name" value="Gamma-aminobutyraldehyde dehydrogenase"/>
    <property type="match status" value="1"/>
</dbReference>
<dbReference type="Gene3D" id="3.40.605.10">
    <property type="entry name" value="Aldehyde Dehydrogenase, Chain A, domain 1"/>
    <property type="match status" value="1"/>
</dbReference>
<dbReference type="Gene3D" id="3.40.309.10">
    <property type="entry name" value="Aldehyde Dehydrogenase, Chain A, domain 2"/>
    <property type="match status" value="1"/>
</dbReference>
<dbReference type="HAMAP" id="MF_01275">
    <property type="entry name" value="Aldedh_Prr"/>
    <property type="match status" value="1"/>
</dbReference>
<dbReference type="InterPro" id="IPR016161">
    <property type="entry name" value="Ald_DH/histidinol_DH"/>
</dbReference>
<dbReference type="InterPro" id="IPR016163">
    <property type="entry name" value="Ald_DH_C"/>
</dbReference>
<dbReference type="InterPro" id="IPR029510">
    <property type="entry name" value="Ald_DH_CS_GLU"/>
</dbReference>
<dbReference type="InterPro" id="IPR016162">
    <property type="entry name" value="Ald_DH_N"/>
</dbReference>
<dbReference type="InterPro" id="IPR015590">
    <property type="entry name" value="Aldehyde_DH_dom"/>
</dbReference>
<dbReference type="InterPro" id="IPR015657">
    <property type="entry name" value="Aminobutyraldehyde_DH"/>
</dbReference>
<dbReference type="InterPro" id="IPR017749">
    <property type="entry name" value="PatD"/>
</dbReference>
<dbReference type="NCBIfam" id="TIGR03374">
    <property type="entry name" value="ABALDH"/>
    <property type="match status" value="1"/>
</dbReference>
<dbReference type="NCBIfam" id="NF010000">
    <property type="entry name" value="PRK13473.1"/>
    <property type="match status" value="1"/>
</dbReference>
<dbReference type="PANTHER" id="PTHR11699">
    <property type="entry name" value="ALDEHYDE DEHYDROGENASE-RELATED"/>
    <property type="match status" value="1"/>
</dbReference>
<dbReference type="Pfam" id="PF00171">
    <property type="entry name" value="Aldedh"/>
    <property type="match status" value="1"/>
</dbReference>
<dbReference type="SUPFAM" id="SSF53720">
    <property type="entry name" value="ALDH-like"/>
    <property type="match status" value="1"/>
</dbReference>
<dbReference type="PROSITE" id="PS00687">
    <property type="entry name" value="ALDEHYDE_DEHYDR_GLU"/>
    <property type="match status" value="1"/>
</dbReference>
<name>ABDH_ECODH</name>
<feature type="chain" id="PRO_1000140271" description="Gamma-aminobutyraldehyde dehydrogenase">
    <location>
        <begin position="1"/>
        <end position="474"/>
    </location>
</feature>
<feature type="active site" evidence="1">
    <location>
        <position position="246"/>
    </location>
</feature>
<feature type="active site" description="Nucleophile" evidence="1">
    <location>
        <position position="280"/>
    </location>
</feature>
<feature type="binding site" evidence="1">
    <location>
        <begin position="146"/>
        <end position="148"/>
    </location>
    <ligand>
        <name>NAD(+)</name>
        <dbReference type="ChEBI" id="CHEBI:57540"/>
    </ligand>
</feature>
<feature type="binding site" evidence="1">
    <location>
        <begin position="172"/>
        <end position="175"/>
    </location>
    <ligand>
        <name>NAD(+)</name>
        <dbReference type="ChEBI" id="CHEBI:57540"/>
    </ligand>
</feature>
<feature type="binding site" evidence="1">
    <location>
        <position position="209"/>
    </location>
    <ligand>
        <name>NAD(+)</name>
        <dbReference type="ChEBI" id="CHEBI:57540"/>
    </ligand>
</feature>
<feature type="binding site" evidence="1">
    <location>
        <begin position="225"/>
        <end position="228"/>
    </location>
    <ligand>
        <name>NAD(+)</name>
        <dbReference type="ChEBI" id="CHEBI:57540"/>
    </ligand>
</feature>
<feature type="binding site" evidence="1">
    <location>
        <position position="280"/>
    </location>
    <ligand>
        <name>NAD(+)</name>
        <dbReference type="ChEBI" id="CHEBI:57540"/>
    </ligand>
</feature>
<evidence type="ECO:0000255" key="1">
    <source>
        <dbReference type="HAMAP-Rule" id="MF_01275"/>
    </source>
</evidence>
<organism>
    <name type="scientific">Escherichia coli (strain K12 / DH10B)</name>
    <dbReference type="NCBI Taxonomy" id="316385"/>
    <lineage>
        <taxon>Bacteria</taxon>
        <taxon>Pseudomonadati</taxon>
        <taxon>Pseudomonadota</taxon>
        <taxon>Gammaproteobacteria</taxon>
        <taxon>Enterobacterales</taxon>
        <taxon>Enterobacteriaceae</taxon>
        <taxon>Escherichia</taxon>
    </lineage>
</organism>
<gene>
    <name evidence="1" type="primary">patD</name>
    <name type="ordered locus">ECDH10B_1574</name>
</gene>
<sequence length="474" mass="50830">MQHKLLINGELVSGEGEKQPVYNPATGDVLLEIAEASAEQVDAAVRAADAAFAEWGQTTPKVRAECLLKLADVIEENGQVFAELESRNCGKPLHSAFNDEIPAIVDVFRFFAGAARCLNGLAAGEYLEGHTSMIRRDPLGVVASIAPWNYPLMMAAWKLAPALAAGNCVVLKPSEITPLTALKLAELAKDIFPAGVINILFGRGKTVGDPLTGHPKVRMVSLTGSIATGEHIISHTASSIKRTHMELGGKAPVIVFDDADIEAVVEGVRTFGYYNAGQDCTAACRIYAQKGIYDTLVEKLGAAVATLKSGAPDDESTELGPLSSLAHLERVGKAVEEAKATGHIKVITGGEKRKGNGYYYAPTLLAGALQDDAIVQKEVFGPVVSVTPFDNEEQVVNWANDSQYGLASSVWTKDVGRAHRVSARLQYGCTWVNTHFMLVSEMPHGGQKLSGYGKDMSLYGLEDYTVVRHVMVKH</sequence>
<keyword id="KW-0520">NAD</keyword>
<keyword id="KW-0560">Oxidoreductase</keyword>
<accession>B1XDF5</accession>
<proteinExistence type="inferred from homology"/>
<comment type="function">
    <text evidence="1">Catalyzes the oxidation 4-aminobutanal (gamma-aminobutyraldehyde) to 4-aminobutanoate (gamma-aminobutyrate or GABA). This is the second step in one of two pathways for putrescine degradation, where putrescine is converted into 4-aminobutanoate via 4-aminobutanal. Also functions as a 5-aminopentanal dehydrogenase in a a L-lysine degradation pathway to succinate that proceeds via cadaverine, glutarate and L-2-hydroxyglutarate.</text>
</comment>
<comment type="catalytic activity">
    <reaction evidence="1">
        <text>4-aminobutanal + NAD(+) + H2O = 4-aminobutanoate + NADH + 2 H(+)</text>
        <dbReference type="Rhea" id="RHEA:19105"/>
        <dbReference type="ChEBI" id="CHEBI:15377"/>
        <dbReference type="ChEBI" id="CHEBI:15378"/>
        <dbReference type="ChEBI" id="CHEBI:57540"/>
        <dbReference type="ChEBI" id="CHEBI:57945"/>
        <dbReference type="ChEBI" id="CHEBI:58264"/>
        <dbReference type="ChEBI" id="CHEBI:59888"/>
        <dbReference type="EC" id="1.2.1.19"/>
    </reaction>
    <physiologicalReaction direction="left-to-right" evidence="1">
        <dbReference type="Rhea" id="RHEA:19106"/>
    </physiologicalReaction>
</comment>
<comment type="catalytic activity">
    <reaction evidence="1">
        <text>5-aminopentanal + NAD(+) + H2O = 5-aminopentanoate + NADH + 2 H(+)</text>
        <dbReference type="Rhea" id="RHEA:61632"/>
        <dbReference type="ChEBI" id="CHEBI:15377"/>
        <dbReference type="ChEBI" id="CHEBI:15378"/>
        <dbReference type="ChEBI" id="CHEBI:57540"/>
        <dbReference type="ChEBI" id="CHEBI:57945"/>
        <dbReference type="ChEBI" id="CHEBI:144896"/>
        <dbReference type="ChEBI" id="CHEBI:356010"/>
    </reaction>
    <physiologicalReaction direction="left-to-right" evidence="1">
        <dbReference type="Rhea" id="RHEA:61633"/>
    </physiologicalReaction>
</comment>
<comment type="pathway">
    <text evidence="1">Amine and polyamine degradation; putrescine degradation; 4-aminobutanoate from 4-aminobutanal: step 1/1.</text>
</comment>
<comment type="pathway">
    <text evidence="1">Amino-acid degradation.</text>
</comment>
<comment type="subunit">
    <text evidence="1">Homotetramer.</text>
</comment>
<comment type="miscellaneous">
    <text evidence="1">4-aminobutanal can spontaneously cyclize to 1-pyrroline, and 5-aminopentanal to 1-piperideine.</text>
</comment>
<comment type="similarity">
    <text evidence="1">Belongs to the aldehyde dehydrogenase family. Gamma-aminobutyraldehyde dehydrogenase subfamily.</text>
</comment>
<reference key="1">
    <citation type="journal article" date="2008" name="J. Bacteriol.">
        <title>The complete genome sequence of Escherichia coli DH10B: insights into the biology of a laboratory workhorse.</title>
        <authorList>
            <person name="Durfee T."/>
            <person name="Nelson R."/>
            <person name="Baldwin S."/>
            <person name="Plunkett G. III"/>
            <person name="Burland V."/>
            <person name="Mau B."/>
            <person name="Petrosino J.F."/>
            <person name="Qin X."/>
            <person name="Muzny D.M."/>
            <person name="Ayele M."/>
            <person name="Gibbs R.A."/>
            <person name="Csorgo B."/>
            <person name="Posfai G."/>
            <person name="Weinstock G.M."/>
            <person name="Blattner F.R."/>
        </authorList>
    </citation>
    <scope>NUCLEOTIDE SEQUENCE [LARGE SCALE GENOMIC DNA]</scope>
    <source>
        <strain>K12 / DH10B</strain>
    </source>
</reference>